<gene>
    <name type="primary">fas1</name>
    <name type="ORF">SPAC926.09c</name>
</gene>
<proteinExistence type="evidence at protein level"/>
<accession>Q9UUG0</accession>
<accession>P78799</accession>
<keyword id="KW-0275">Fatty acid biosynthesis</keyword>
<keyword id="KW-0276">Fatty acid metabolism</keyword>
<keyword id="KW-0378">Hydrolase</keyword>
<keyword id="KW-0444">Lipid biosynthesis</keyword>
<keyword id="KW-0443">Lipid metabolism</keyword>
<keyword id="KW-0456">Lyase</keyword>
<keyword id="KW-0511">Multifunctional enzyme</keyword>
<keyword id="KW-0520">NAD</keyword>
<keyword id="KW-0521">NADP</keyword>
<keyword id="KW-0560">Oxidoreductase</keyword>
<keyword id="KW-0597">Phosphoprotein</keyword>
<keyword id="KW-1185">Reference proteome</keyword>
<keyword id="KW-0808">Transferase</keyword>
<name>FAS1_SCHPO</name>
<feature type="chain" id="PRO_0000180281" description="Fatty acid synthase subunit beta">
    <location>
        <begin position="1"/>
        <end position="2073"/>
    </location>
</feature>
<feature type="domain" description="MaoC-like">
    <location>
        <begin position="1558"/>
        <end position="1667"/>
    </location>
</feature>
<feature type="region of interest" description="Acetyltransferase">
    <location>
        <begin position="1"/>
        <end position="459"/>
    </location>
</feature>
<feature type="region of interest" description="Enoyl reductase">
    <location>
        <begin position="470"/>
        <end position="858"/>
    </location>
</feature>
<feature type="region of interest" description="Dehydratase">
    <location>
        <begin position="1155"/>
        <end position="1644"/>
    </location>
</feature>
<feature type="region of interest" description="Malonyl/palmitoyl transferase">
    <location>
        <begin position="1645"/>
        <end position="2073"/>
    </location>
</feature>
<feature type="active site" description="For acetyltransferase activity" evidence="1">
    <location>
        <position position="270"/>
    </location>
</feature>
<feature type="active site" description="For dehydratase activity" evidence="2">
    <location>
        <position position="1361"/>
    </location>
</feature>
<feature type="active site" description="For malonyltransferase activity" evidence="1">
    <location>
        <position position="1828"/>
    </location>
</feature>
<feature type="modified residue" description="Phosphoserine" evidence="3">
    <location>
        <position position="1122"/>
    </location>
</feature>
<feature type="modified residue" description="Phosphoserine" evidence="3">
    <location>
        <position position="2073"/>
    </location>
</feature>
<feature type="sequence conflict" description="In Ref. 1; BAA36384." evidence="5" ref="1">
    <original>P</original>
    <variation>R</variation>
    <location>
        <position position="222"/>
    </location>
</feature>
<protein>
    <recommendedName>
        <fullName>Fatty acid synthase subunit beta</fullName>
        <ecNumber>2.3.1.86</ecNumber>
    </recommendedName>
    <domain>
        <recommendedName>
            <fullName>3-hydroxyacyl-[acyl-carrier-protein] dehydratase</fullName>
            <ecNumber>4.2.1.59</ecNumber>
        </recommendedName>
    </domain>
    <domain>
        <recommendedName>
            <fullName>Enoyl-[acyl-carrier-protein] reductase [NADH]</fullName>
            <ecNumber>1.3.1.9</ecNumber>
        </recommendedName>
    </domain>
    <domain>
        <recommendedName>
            <fullName>[Acyl-carrier-protein] acetyltransferase</fullName>
            <ecNumber>2.3.1.38</ecNumber>
        </recommendedName>
    </domain>
    <domain>
        <recommendedName>
            <fullName>[Acyl-carrier-protein] malonyltransferase</fullName>
            <ecNumber>2.3.1.39</ecNumber>
        </recommendedName>
    </domain>
    <domain>
        <recommendedName>
            <fullName>S-acyl fatty acid synthase thioesterase</fullName>
            <ecNumber>3.1.2.14</ecNumber>
        </recommendedName>
    </domain>
</protein>
<dbReference type="EC" id="2.3.1.86"/>
<dbReference type="EC" id="4.2.1.59"/>
<dbReference type="EC" id="1.3.1.9"/>
<dbReference type="EC" id="2.3.1.38"/>
<dbReference type="EC" id="2.3.1.39"/>
<dbReference type="EC" id="3.1.2.14"/>
<dbReference type="EMBL" id="AB010274">
    <property type="protein sequence ID" value="BAA36384.1"/>
    <property type="molecule type" value="Genomic_DNA"/>
</dbReference>
<dbReference type="EMBL" id="CU329670">
    <property type="protein sequence ID" value="CAB54157.1"/>
    <property type="molecule type" value="Genomic_DNA"/>
</dbReference>
<dbReference type="EMBL" id="D89148">
    <property type="protein sequence ID" value="BAA13810.1"/>
    <property type="molecule type" value="mRNA"/>
</dbReference>
<dbReference type="PIR" id="T39207">
    <property type="entry name" value="T39207"/>
</dbReference>
<dbReference type="PIR" id="T42424">
    <property type="entry name" value="T42424"/>
</dbReference>
<dbReference type="PIR" id="T43311">
    <property type="entry name" value="T43311"/>
</dbReference>
<dbReference type="RefSeq" id="NP_594370.1">
    <property type="nucleotide sequence ID" value="NM_001019791.2"/>
</dbReference>
<dbReference type="SMR" id="Q9UUG0"/>
<dbReference type="BioGRID" id="279916">
    <property type="interactions" value="17"/>
</dbReference>
<dbReference type="FunCoup" id="Q9UUG0">
    <property type="interactions" value="32"/>
</dbReference>
<dbReference type="STRING" id="284812.Q9UUG0"/>
<dbReference type="iPTMnet" id="Q9UUG0"/>
<dbReference type="PaxDb" id="4896-SPAC926.09c.1"/>
<dbReference type="EnsemblFungi" id="SPAC926.09c.1">
    <property type="protein sequence ID" value="SPAC926.09c.1:pep"/>
    <property type="gene ID" value="SPAC926.09c"/>
</dbReference>
<dbReference type="GeneID" id="2543497"/>
<dbReference type="KEGG" id="spo:2543497"/>
<dbReference type="PomBase" id="SPAC926.09c">
    <property type="gene designation" value="fas1"/>
</dbReference>
<dbReference type="VEuPathDB" id="FungiDB:SPAC926.09c"/>
<dbReference type="eggNOG" id="ENOG502QQJX">
    <property type="taxonomic scope" value="Eukaryota"/>
</dbReference>
<dbReference type="HOGENOM" id="CLU_000114_5_0_1"/>
<dbReference type="InParanoid" id="Q9UUG0"/>
<dbReference type="OMA" id="HFMDNYG"/>
<dbReference type="PhylomeDB" id="Q9UUG0"/>
<dbReference type="PRO" id="PR:Q9UUG0"/>
<dbReference type="Proteomes" id="UP000002485">
    <property type="component" value="Chromosome I"/>
</dbReference>
<dbReference type="GO" id="GO:0005829">
    <property type="term" value="C:cytosol"/>
    <property type="evidence" value="ECO:0007005"/>
    <property type="project" value="PomBase"/>
</dbReference>
<dbReference type="GO" id="GO:0005835">
    <property type="term" value="C:fatty acid synthase complex"/>
    <property type="evidence" value="ECO:0000314"/>
    <property type="project" value="PomBase"/>
</dbReference>
<dbReference type="GO" id="GO:0016020">
    <property type="term" value="C:membrane"/>
    <property type="evidence" value="ECO:0007669"/>
    <property type="project" value="GOC"/>
</dbReference>
<dbReference type="GO" id="GO:0019171">
    <property type="term" value="F:(3R)-hydroxyacyl-[acyl-carrier-protein] dehydratase activity"/>
    <property type="evidence" value="ECO:0000266"/>
    <property type="project" value="PomBase"/>
</dbReference>
<dbReference type="GO" id="GO:0004313">
    <property type="term" value="F:[acyl-carrier-protein] S-acetyltransferase activity"/>
    <property type="evidence" value="ECO:0000266"/>
    <property type="project" value="PomBase"/>
</dbReference>
<dbReference type="GO" id="GO:0004314">
    <property type="term" value="F:[acyl-carrier-protein] S-malonyltransferase activity"/>
    <property type="evidence" value="ECO:0000266"/>
    <property type="project" value="PomBase"/>
</dbReference>
<dbReference type="GO" id="GO:0004318">
    <property type="term" value="F:enoyl-[acyl-carrier-protein] reductase (NADH) activity"/>
    <property type="evidence" value="ECO:0000266"/>
    <property type="project" value="PomBase"/>
</dbReference>
<dbReference type="GO" id="GO:0004312">
    <property type="term" value="F:fatty acid synthase activity"/>
    <property type="evidence" value="ECO:0000314"/>
    <property type="project" value="PomBase"/>
</dbReference>
<dbReference type="GO" id="GO:0016297">
    <property type="term" value="F:fatty acyl-[ACP] hydrolase activity"/>
    <property type="evidence" value="ECO:0007669"/>
    <property type="project" value="UniProtKB-EC"/>
</dbReference>
<dbReference type="GO" id="GO:0004321">
    <property type="term" value="F:fatty-acyl-CoA synthase activity"/>
    <property type="evidence" value="ECO:0000303"/>
    <property type="project" value="PomBase"/>
</dbReference>
<dbReference type="GO" id="GO:0006633">
    <property type="term" value="P:fatty acid biosynthetic process"/>
    <property type="evidence" value="ECO:0000314"/>
    <property type="project" value="PomBase"/>
</dbReference>
<dbReference type="GO" id="GO:0042759">
    <property type="term" value="P:long-chain fatty acid biosynthetic process"/>
    <property type="evidence" value="ECO:0000318"/>
    <property type="project" value="GO_Central"/>
</dbReference>
<dbReference type="GO" id="GO:0046467">
    <property type="term" value="P:membrane lipid biosynthetic process"/>
    <property type="evidence" value="ECO:0000305"/>
    <property type="project" value="PomBase"/>
</dbReference>
<dbReference type="CDD" id="cd03447">
    <property type="entry name" value="FAS_MaoC"/>
    <property type="match status" value="1"/>
</dbReference>
<dbReference type="FunFam" id="1.20.930.70:FF:000001">
    <property type="entry name" value="Fatty acid synthase beta subunit dehydratase"/>
    <property type="match status" value="1"/>
</dbReference>
<dbReference type="FunFam" id="3.10.129.10:FF:000017">
    <property type="entry name" value="Fatty acid synthase beta subunit dehydratase"/>
    <property type="match status" value="1"/>
</dbReference>
<dbReference type="FunFam" id="3.20.20.70:FF:000078">
    <property type="entry name" value="Fatty acid synthase beta subunit dehydratase"/>
    <property type="match status" value="1"/>
</dbReference>
<dbReference type="FunFam" id="3.30.1120.100:FF:000001">
    <property type="entry name" value="Fatty acid synthase beta subunit dehydratase"/>
    <property type="match status" value="1"/>
</dbReference>
<dbReference type="FunFam" id="3.40.366.10:FF:000006">
    <property type="entry name" value="Fatty acid synthase beta subunit dehydratase"/>
    <property type="match status" value="1"/>
</dbReference>
<dbReference type="FunFam" id="3.30.70.3330:FF:000001">
    <property type="entry name" value="Fatty acid synthase subunit beta dehydratase"/>
    <property type="match status" value="1"/>
</dbReference>
<dbReference type="FunFam" id="3.40.366.10:FF:000003">
    <property type="entry name" value="Fatty acid synthase subunit beta dehydratase"/>
    <property type="match status" value="1"/>
</dbReference>
<dbReference type="Gene3D" id="1.20.1050.120">
    <property type="match status" value="1"/>
</dbReference>
<dbReference type="Gene3D" id="1.20.930.70">
    <property type="match status" value="1"/>
</dbReference>
<dbReference type="Gene3D" id="3.30.1120.100">
    <property type="match status" value="1"/>
</dbReference>
<dbReference type="Gene3D" id="3.30.70.3330">
    <property type="match status" value="1"/>
</dbReference>
<dbReference type="Gene3D" id="6.10.140.1400">
    <property type="match status" value="1"/>
</dbReference>
<dbReference type="Gene3D" id="6.10.60.10">
    <property type="match status" value="1"/>
</dbReference>
<dbReference type="Gene3D" id="6.20.240.10">
    <property type="match status" value="1"/>
</dbReference>
<dbReference type="Gene3D" id="3.20.20.70">
    <property type="entry name" value="Aldolase class I"/>
    <property type="match status" value="2"/>
</dbReference>
<dbReference type="Gene3D" id="3.10.129.10">
    <property type="entry name" value="Hotdog Thioesterase"/>
    <property type="match status" value="2"/>
</dbReference>
<dbReference type="Gene3D" id="3.40.366.10">
    <property type="entry name" value="Malonyl-Coenzyme A Acyl Carrier Protein, domain 2"/>
    <property type="match status" value="3"/>
</dbReference>
<dbReference type="InterPro" id="IPR001227">
    <property type="entry name" value="Ac_transferase_dom_sf"/>
</dbReference>
<dbReference type="InterPro" id="IPR014043">
    <property type="entry name" value="Acyl_transferase_dom"/>
</dbReference>
<dbReference type="InterPro" id="IPR016035">
    <property type="entry name" value="Acyl_Trfase/lysoPLipase"/>
</dbReference>
<dbReference type="InterPro" id="IPR013785">
    <property type="entry name" value="Aldolase_TIM"/>
</dbReference>
<dbReference type="InterPro" id="IPR039569">
    <property type="entry name" value="FAS1-like_DH_region"/>
</dbReference>
<dbReference type="InterPro" id="IPR016452">
    <property type="entry name" value="Fas1/AflB-like"/>
</dbReference>
<dbReference type="InterPro" id="IPR013565">
    <property type="entry name" value="Fas1/AflB-like_central"/>
</dbReference>
<dbReference type="InterPro" id="IPR041099">
    <property type="entry name" value="FAS1_N"/>
</dbReference>
<dbReference type="InterPro" id="IPR040883">
    <property type="entry name" value="FAS_meander"/>
</dbReference>
<dbReference type="InterPro" id="IPR003965">
    <property type="entry name" value="Fatty_acid_synthase"/>
</dbReference>
<dbReference type="InterPro" id="IPR050830">
    <property type="entry name" value="Fungal_FAS"/>
</dbReference>
<dbReference type="InterPro" id="IPR029069">
    <property type="entry name" value="HotDog_dom_sf"/>
</dbReference>
<dbReference type="InterPro" id="IPR002539">
    <property type="entry name" value="MaoC-like_dom"/>
</dbReference>
<dbReference type="InterPro" id="IPR032088">
    <property type="entry name" value="SAT"/>
</dbReference>
<dbReference type="PANTHER" id="PTHR10982:SF21">
    <property type="entry name" value="FATTY ACID SYNTHASE SUBUNIT BETA"/>
    <property type="match status" value="1"/>
</dbReference>
<dbReference type="PANTHER" id="PTHR10982">
    <property type="entry name" value="MALONYL COA-ACYL CARRIER PROTEIN TRANSACYLASE"/>
    <property type="match status" value="1"/>
</dbReference>
<dbReference type="Pfam" id="PF00698">
    <property type="entry name" value="Acyl_transf_1"/>
    <property type="match status" value="1"/>
</dbReference>
<dbReference type="Pfam" id="PF08354">
    <property type="entry name" value="Fas1-AflB-like_hel"/>
    <property type="match status" value="1"/>
</dbReference>
<dbReference type="Pfam" id="PF13452">
    <property type="entry name" value="FAS1_DH_region"/>
    <property type="match status" value="1"/>
</dbReference>
<dbReference type="Pfam" id="PF22235">
    <property type="entry name" value="FAS1_thioest_ins"/>
    <property type="match status" value="1"/>
</dbReference>
<dbReference type="Pfam" id="PF17951">
    <property type="entry name" value="FAS_meander"/>
    <property type="match status" value="1"/>
</dbReference>
<dbReference type="Pfam" id="PF17828">
    <property type="entry name" value="FAS_N"/>
    <property type="match status" value="1"/>
</dbReference>
<dbReference type="Pfam" id="PF01575">
    <property type="entry name" value="MaoC_dehydratas"/>
    <property type="match status" value="1"/>
</dbReference>
<dbReference type="Pfam" id="PF16073">
    <property type="entry name" value="SAT"/>
    <property type="match status" value="1"/>
</dbReference>
<dbReference type="PIRSF" id="PIRSF005562">
    <property type="entry name" value="FAS_yeast_beta"/>
    <property type="match status" value="1"/>
</dbReference>
<dbReference type="PRINTS" id="PR01483">
    <property type="entry name" value="FASYNTHASE"/>
</dbReference>
<dbReference type="SMART" id="SM00827">
    <property type="entry name" value="PKS_AT"/>
    <property type="match status" value="1"/>
</dbReference>
<dbReference type="SUPFAM" id="SSF52151">
    <property type="entry name" value="FabD/lysophospholipase-like"/>
    <property type="match status" value="2"/>
</dbReference>
<dbReference type="SUPFAM" id="SSF51412">
    <property type="entry name" value="Inosine monophosphate dehydrogenase (IMPDH)"/>
    <property type="match status" value="1"/>
</dbReference>
<dbReference type="SUPFAM" id="SSF54637">
    <property type="entry name" value="Thioesterase/thiol ester dehydrase-isomerase"/>
    <property type="match status" value="2"/>
</dbReference>
<evidence type="ECO:0000250" key="1"/>
<evidence type="ECO:0000255" key="2"/>
<evidence type="ECO:0000269" key="3">
    <source>
    </source>
</evidence>
<evidence type="ECO:0000269" key="4">
    <source>
    </source>
</evidence>
<evidence type="ECO:0000305" key="5"/>
<organism>
    <name type="scientific">Schizosaccharomyces pombe (strain 972 / ATCC 24843)</name>
    <name type="common">Fission yeast</name>
    <dbReference type="NCBI Taxonomy" id="284812"/>
    <lineage>
        <taxon>Eukaryota</taxon>
        <taxon>Fungi</taxon>
        <taxon>Dikarya</taxon>
        <taxon>Ascomycota</taxon>
        <taxon>Taphrinomycotina</taxon>
        <taxon>Schizosaccharomycetes</taxon>
        <taxon>Schizosaccharomycetales</taxon>
        <taxon>Schizosaccharomycetaceae</taxon>
        <taxon>Schizosaccharomyces</taxon>
    </lineage>
</organism>
<sequence length="2073" mass="230561">MVEAEQVHQSLRSLVLSYAHFSPSILIPASQYLLAAQLRDEFLSLHPAPSAESVEKEGAELEFEHELHLLAGFLGLIAAKEEETPGQYTQLLRIITLEFERTFLAGNEVHAVVHSLGLNIPAQKDVVRFYYHSCALIGQTTKFHGSALLDESSVKLAAIFGGQGYEDYFDELIELYEVYAPFAAELIQVLSKHLFTLSQNEQASKVYSKGLNVLDWLAGERPERDYLVSAPVSLPLVGLTQLVHFSVTAQILGLNPGELASRFSAASGHSQGIVVAAAVSASTDSASFMENAKVALTTLFWIGVRSQQTFPTTTLPPSVVADSLASSEGNPTPMLAVRDLPIETLNKHIETTNTHLPEDRKVSLSLVNGPRSFVVSGPARSLYGLNLSLRKEKADGQNQSRIPHSKRKLRFINRFLSISVPFHSPYLAPVRSLLEKDLQGLQFSALKVPVYSTDDAGDLRFEQPSKLLLALAVMITEKVVHWEEACGFPDVTHIIDFGPGGISGVGSLTRANKDGQGVRVIVADSFESLDMGAKFEIFDRDAKSIEFAPNWVKLYSPKLVKNKLGRVYVDTRLSRMLGLPPLWVAGMTPTSVPWQFCSAIAKAGFTYELAGGGYFDPKMMREAIHKLSLNIPPGAGICVNVIYINPRTYAWQIPLIRDMVAEGYPIRGVTIAAGIPSLEVANELISTLGVQYLCLKPGSVEAVNAVISIAKANPTFPIVLQWTGGRAGGHHSFEDFHSPILLTYSAIRRCDNIVLIAGSGFGGADDTEPYLTGEWSAAFKLPPMPFDGILFGSRLMVAKEAHTSLAAKEAIVAAKGVDDSEWEKTYDGPTGGIVTVLSELGEPIHKLATRGIMFWKELDDTIFSLPRPKRLPALLAKKQYIIKRLNDDFQKVYFPAHIVEQVSPEKFKFEAVDSVEDMTYAELLYRAIDLMYVTKEKRWIDVTLRTFTGKLMRRIEERFTQDVGKTTLIENFEDLNDPYPVAARFLDAYPEASTQDLNTQDAQFFYSLCSNPFQKPVPFIPAIDDTFEFYFKKDSLWQSEDLAAVVGEDVGRVAILQGPMAAKHSTKVNEPAKELLDGINETHIQHFIKKFYAGDEKKIPIVEYFGGVPPVNVSHKSLESVSVTEEAGSKVYKLPEIGSNSALPSKKLWFELLAGPEYTWFRAIFTTQRVAKGWKLEHNPVRRIFAPRYGQRAVVKGKDNDTVVELYETQSGNYVLAARLSYDGETIVVSMFENRNALKKEVHLDFLFKYEPSAGYSPVSEILDGRNDRIKHFYWALWFGEEPYPENASITDTFTGPEVTVTGNMIEDFCRTVGNHNEAYTKRAIRKRMAPMDFAIVVGWQAITKAIFPKAIDGDLLRLVHLSNSFRMVGSHSLMEGDKVTTSASIIAILNNDSGKTVTVKGTVYRDGKEVIEVISRFLYRGTFTDFENTFEHTQETPMQLTLATPKDVAVLQSKSWFQLLDPSQDLSGSILTFRLNSYVRFKDQKVKSSVETKGIVLSELPSKAIIQVASVDFQSVDCHGNPVIEFLKRNGKPIEQPVEFENGGYSVIQVMDEGYSPVFVTPPTNSPYAEVSGDYNPIHVSPTFAAFVELPGTHGITHGMYTSAAARRFVETYAAQNVPERVKHYEVTFVNMVLPNTELITKLSHTGMINGRKIIKVEVLNQETSEPVLVGTAEVEQPVSAYVFTGQGSQEQGMGMDLYASSPVARKIWDSADKHFLTNYGFSIIDIVKHNPHSITIHFGGSKGKKIRDNYMAMAYEKLMEDGTSKVVPVFETITKDSTSFSFTHPSGLLSATQFTQPALTLMEKSAFEDMRSKGLVQNDCAFAGHSLGEYSALSAMGDVLSIEALVDLVFLRGLTMQNAVHRDELGRSDYGMVAANPSRVSASFTDAALRFIVDHIGQQTNLLLEIVNYNVENQQYVVSGNLLSLSTLGHVLNFLKVQKIDFEKLKETLTIEQLKEQLTDIVEACHAKTLEQQKKTGRIELERGYATIPLKIDVPFHSSFLRGGVRMFREYLVKKIFPHQINVAKLRGKYIPNLTAKPFEISKEYFQNVYDLTGSQRIKKILQNWDEYESS</sequence>
<comment type="function">
    <text>Fatty acid synthetase catalyzes the formation of long-chain fatty acids from acetyl-CoA, malonyl-CoA and NADPH. The beta subunit contains domains for: [acyl-carrier-protein] acetyltransferase and malonyltransferase, S-acyl fatty acid synthase thioesterase, enoyl-[acyl-carrier-protein] reductase, and 3-hydroxypalmitoyl-[acyl-carrier-protein] dehydratase.</text>
</comment>
<comment type="catalytic activity">
    <reaction>
        <text>acetyl-CoA + n malonyl-CoA + 2n NADPH + 4n H(+) = a long-chain-acyl-CoA + n CoA + n CO2 + 2n NADP(+).</text>
        <dbReference type="EC" id="2.3.1.86"/>
    </reaction>
</comment>
<comment type="catalytic activity">
    <reaction>
        <text>holo-[ACP] + acetyl-CoA = acetyl-[ACP] + CoA</text>
        <dbReference type="Rhea" id="RHEA:41788"/>
        <dbReference type="Rhea" id="RHEA-COMP:9621"/>
        <dbReference type="Rhea" id="RHEA-COMP:9685"/>
        <dbReference type="ChEBI" id="CHEBI:57287"/>
        <dbReference type="ChEBI" id="CHEBI:57288"/>
        <dbReference type="ChEBI" id="CHEBI:64479"/>
        <dbReference type="ChEBI" id="CHEBI:78446"/>
        <dbReference type="EC" id="2.3.1.38"/>
    </reaction>
</comment>
<comment type="catalytic activity">
    <reaction>
        <text>holo-[ACP] + malonyl-CoA = malonyl-[ACP] + CoA</text>
        <dbReference type="Rhea" id="RHEA:41792"/>
        <dbReference type="Rhea" id="RHEA-COMP:9623"/>
        <dbReference type="Rhea" id="RHEA-COMP:9685"/>
        <dbReference type="ChEBI" id="CHEBI:57287"/>
        <dbReference type="ChEBI" id="CHEBI:57384"/>
        <dbReference type="ChEBI" id="CHEBI:64479"/>
        <dbReference type="ChEBI" id="CHEBI:78449"/>
        <dbReference type="EC" id="2.3.1.39"/>
    </reaction>
</comment>
<comment type="catalytic activity">
    <reaction>
        <text>a (3R)-hydroxyacyl-[ACP] = a (2E)-enoyl-[ACP] + H2O</text>
        <dbReference type="Rhea" id="RHEA:13097"/>
        <dbReference type="Rhea" id="RHEA-COMP:9925"/>
        <dbReference type="Rhea" id="RHEA-COMP:9945"/>
        <dbReference type="ChEBI" id="CHEBI:15377"/>
        <dbReference type="ChEBI" id="CHEBI:78784"/>
        <dbReference type="ChEBI" id="CHEBI:78827"/>
        <dbReference type="EC" id="4.2.1.59"/>
    </reaction>
</comment>
<comment type="catalytic activity">
    <reaction>
        <text>a 2,3-saturated acyl-[ACP] + NAD(+) = a (2E)-enoyl-[ACP] + NADH + H(+)</text>
        <dbReference type="Rhea" id="RHEA:10240"/>
        <dbReference type="Rhea" id="RHEA-COMP:9925"/>
        <dbReference type="Rhea" id="RHEA-COMP:9926"/>
        <dbReference type="ChEBI" id="CHEBI:15378"/>
        <dbReference type="ChEBI" id="CHEBI:57540"/>
        <dbReference type="ChEBI" id="CHEBI:57945"/>
        <dbReference type="ChEBI" id="CHEBI:78784"/>
        <dbReference type="ChEBI" id="CHEBI:78785"/>
        <dbReference type="EC" id="1.3.1.9"/>
    </reaction>
</comment>
<comment type="catalytic activity">
    <reaction>
        <text>(9Z)-octadecenoyl-[ACP] + H2O = (9Z)-octadecenoate + holo-[ACP] + H(+)</text>
        <dbReference type="Rhea" id="RHEA:15057"/>
        <dbReference type="Rhea" id="RHEA-COMP:9685"/>
        <dbReference type="Rhea" id="RHEA-COMP:9924"/>
        <dbReference type="ChEBI" id="CHEBI:15377"/>
        <dbReference type="ChEBI" id="CHEBI:15378"/>
        <dbReference type="ChEBI" id="CHEBI:30823"/>
        <dbReference type="ChEBI" id="CHEBI:64479"/>
        <dbReference type="ChEBI" id="CHEBI:78783"/>
        <dbReference type="EC" id="3.1.2.14"/>
    </reaction>
</comment>
<comment type="subunit">
    <text evidence="4">[Alpha(6)beta(6)] hexamers of two multifunctional subunits (alpha and beta).</text>
</comment>
<comment type="similarity">
    <text evidence="5">Belongs to the fungal fatty acid synthetase subunit beta family.</text>
</comment>
<reference key="1">
    <citation type="journal article" date="1998" name="Protein Expr. Purif.">
        <title>Cloning of the fatty acid synthetase beta subunit from fission yeast, coexpression with the alpha subunit, and purification of the intact multifunctional enzyme complex.</title>
        <authorList>
            <person name="Niwa H."/>
            <person name="Katayama E."/>
            <person name="Yanagida M."/>
            <person name="Morikawa K."/>
        </authorList>
    </citation>
    <scope>NUCLEOTIDE SEQUENCE [GENOMIC DNA]</scope>
    <scope>SUBUNIT</scope>
</reference>
<reference key="2">
    <citation type="journal article" date="2002" name="Nature">
        <title>The genome sequence of Schizosaccharomyces pombe.</title>
        <authorList>
            <person name="Wood V."/>
            <person name="Gwilliam R."/>
            <person name="Rajandream M.A."/>
            <person name="Lyne M.H."/>
            <person name="Lyne R."/>
            <person name="Stewart A."/>
            <person name="Sgouros J.G."/>
            <person name="Peat N."/>
            <person name="Hayles J."/>
            <person name="Baker S.G."/>
            <person name="Basham D."/>
            <person name="Bowman S."/>
            <person name="Brooks K."/>
            <person name="Brown D."/>
            <person name="Brown S."/>
            <person name="Chillingworth T."/>
            <person name="Churcher C.M."/>
            <person name="Collins M."/>
            <person name="Connor R."/>
            <person name="Cronin A."/>
            <person name="Davis P."/>
            <person name="Feltwell T."/>
            <person name="Fraser A."/>
            <person name="Gentles S."/>
            <person name="Goble A."/>
            <person name="Hamlin N."/>
            <person name="Harris D.E."/>
            <person name="Hidalgo J."/>
            <person name="Hodgson G."/>
            <person name="Holroyd S."/>
            <person name="Hornsby T."/>
            <person name="Howarth S."/>
            <person name="Huckle E.J."/>
            <person name="Hunt S."/>
            <person name="Jagels K."/>
            <person name="James K.D."/>
            <person name="Jones L."/>
            <person name="Jones M."/>
            <person name="Leather S."/>
            <person name="McDonald S."/>
            <person name="McLean J."/>
            <person name="Mooney P."/>
            <person name="Moule S."/>
            <person name="Mungall K.L."/>
            <person name="Murphy L.D."/>
            <person name="Niblett D."/>
            <person name="Odell C."/>
            <person name="Oliver K."/>
            <person name="O'Neil S."/>
            <person name="Pearson D."/>
            <person name="Quail M.A."/>
            <person name="Rabbinowitsch E."/>
            <person name="Rutherford K.M."/>
            <person name="Rutter S."/>
            <person name="Saunders D."/>
            <person name="Seeger K."/>
            <person name="Sharp S."/>
            <person name="Skelton J."/>
            <person name="Simmonds M.N."/>
            <person name="Squares R."/>
            <person name="Squares S."/>
            <person name="Stevens K."/>
            <person name="Taylor K."/>
            <person name="Taylor R.G."/>
            <person name="Tivey A."/>
            <person name="Walsh S.V."/>
            <person name="Warren T."/>
            <person name="Whitehead S."/>
            <person name="Woodward J.R."/>
            <person name="Volckaert G."/>
            <person name="Aert R."/>
            <person name="Robben J."/>
            <person name="Grymonprez B."/>
            <person name="Weltjens I."/>
            <person name="Vanstreels E."/>
            <person name="Rieger M."/>
            <person name="Schaefer M."/>
            <person name="Mueller-Auer S."/>
            <person name="Gabel C."/>
            <person name="Fuchs M."/>
            <person name="Duesterhoeft A."/>
            <person name="Fritzc C."/>
            <person name="Holzer E."/>
            <person name="Moestl D."/>
            <person name="Hilbert H."/>
            <person name="Borzym K."/>
            <person name="Langer I."/>
            <person name="Beck A."/>
            <person name="Lehrach H."/>
            <person name="Reinhardt R."/>
            <person name="Pohl T.M."/>
            <person name="Eger P."/>
            <person name="Zimmermann W."/>
            <person name="Wedler H."/>
            <person name="Wambutt R."/>
            <person name="Purnelle B."/>
            <person name="Goffeau A."/>
            <person name="Cadieu E."/>
            <person name="Dreano S."/>
            <person name="Gloux S."/>
            <person name="Lelaure V."/>
            <person name="Mottier S."/>
            <person name="Galibert F."/>
            <person name="Aves S.J."/>
            <person name="Xiang Z."/>
            <person name="Hunt C."/>
            <person name="Moore K."/>
            <person name="Hurst S.M."/>
            <person name="Lucas M."/>
            <person name="Rochet M."/>
            <person name="Gaillardin C."/>
            <person name="Tallada V.A."/>
            <person name="Garzon A."/>
            <person name="Thode G."/>
            <person name="Daga R.R."/>
            <person name="Cruzado L."/>
            <person name="Jimenez J."/>
            <person name="Sanchez M."/>
            <person name="del Rey F."/>
            <person name="Benito J."/>
            <person name="Dominguez A."/>
            <person name="Revuelta J.L."/>
            <person name="Moreno S."/>
            <person name="Armstrong J."/>
            <person name="Forsburg S.L."/>
            <person name="Cerutti L."/>
            <person name="Lowe T."/>
            <person name="McCombie W.R."/>
            <person name="Paulsen I."/>
            <person name="Potashkin J."/>
            <person name="Shpakovski G.V."/>
            <person name="Ussery D."/>
            <person name="Barrell B.G."/>
            <person name="Nurse P."/>
        </authorList>
    </citation>
    <scope>NUCLEOTIDE SEQUENCE [LARGE SCALE GENOMIC DNA]</scope>
    <source>
        <strain>972 / ATCC 24843</strain>
    </source>
</reference>
<reference key="3">
    <citation type="journal article" date="1997" name="DNA Res.">
        <title>Identification of open reading frames in Schizosaccharomyces pombe cDNAs.</title>
        <authorList>
            <person name="Yoshioka S."/>
            <person name="Kato K."/>
            <person name="Nakai K."/>
            <person name="Okayama H."/>
            <person name="Nojima H."/>
        </authorList>
    </citation>
    <scope>NUCLEOTIDE SEQUENCE [LARGE SCALE MRNA] OF 1725-2073</scope>
    <source>
        <strain>PR745</strain>
    </source>
</reference>
<reference key="4">
    <citation type="journal article" date="2008" name="J. Proteome Res.">
        <title>Phosphoproteome analysis of fission yeast.</title>
        <authorList>
            <person name="Wilson-Grady J.T."/>
            <person name="Villen J."/>
            <person name="Gygi S.P."/>
        </authorList>
    </citation>
    <scope>PHOSPHORYLATION [LARGE SCALE ANALYSIS] AT SER-1122 AND SER-2073</scope>
    <scope>IDENTIFICATION BY MASS SPECTROMETRY</scope>
</reference>